<dbReference type="EMBL" id="CM003140">
    <property type="protein sequence ID" value="KIS71740.1"/>
    <property type="molecule type" value="Genomic_DNA"/>
</dbReference>
<dbReference type="RefSeq" id="XP_011386118.1">
    <property type="nucleotide sequence ID" value="XM_011387816.1"/>
</dbReference>
<dbReference type="SMR" id="Q4PI88"/>
<dbReference type="FunCoup" id="Q4PI88">
    <property type="interactions" value="705"/>
</dbReference>
<dbReference type="STRING" id="237631.Q4PI88"/>
<dbReference type="EnsemblFungi" id="KIS71740">
    <property type="protein sequence ID" value="KIS71740"/>
    <property type="gene ID" value="UMAG_00175"/>
</dbReference>
<dbReference type="GeneID" id="23561551"/>
<dbReference type="KEGG" id="uma:UMAG_00175"/>
<dbReference type="VEuPathDB" id="FungiDB:UMAG_00175"/>
<dbReference type="eggNOG" id="KOG2975">
    <property type="taxonomic scope" value="Eukaryota"/>
</dbReference>
<dbReference type="HOGENOM" id="CLU_027018_0_2_1"/>
<dbReference type="InParanoid" id="Q4PI88"/>
<dbReference type="OMA" id="EYFVHFH"/>
<dbReference type="OrthoDB" id="25498at2759"/>
<dbReference type="Proteomes" id="UP000000561">
    <property type="component" value="Chromosome 1"/>
</dbReference>
<dbReference type="GO" id="GO:0016282">
    <property type="term" value="C:eukaryotic 43S preinitiation complex"/>
    <property type="evidence" value="ECO:0007669"/>
    <property type="project" value="UniProtKB-UniRule"/>
</dbReference>
<dbReference type="GO" id="GO:0033290">
    <property type="term" value="C:eukaryotic 48S preinitiation complex"/>
    <property type="evidence" value="ECO:0007669"/>
    <property type="project" value="UniProtKB-UniRule"/>
</dbReference>
<dbReference type="GO" id="GO:0071540">
    <property type="term" value="C:eukaryotic translation initiation factor 3 complex, eIF3e"/>
    <property type="evidence" value="ECO:0007669"/>
    <property type="project" value="EnsemblFungi"/>
</dbReference>
<dbReference type="GO" id="GO:0071541">
    <property type="term" value="C:eukaryotic translation initiation factor 3 complex, eIF3m"/>
    <property type="evidence" value="ECO:0000318"/>
    <property type="project" value="GO_Central"/>
</dbReference>
<dbReference type="GO" id="GO:0008237">
    <property type="term" value="F:metallopeptidase activity"/>
    <property type="evidence" value="ECO:0007669"/>
    <property type="project" value="InterPro"/>
</dbReference>
<dbReference type="GO" id="GO:0003743">
    <property type="term" value="F:translation initiation factor activity"/>
    <property type="evidence" value="ECO:0007669"/>
    <property type="project" value="UniProtKB-UniRule"/>
</dbReference>
<dbReference type="GO" id="GO:0031369">
    <property type="term" value="F:translation initiation factor binding"/>
    <property type="evidence" value="ECO:0000318"/>
    <property type="project" value="GO_Central"/>
</dbReference>
<dbReference type="GO" id="GO:0001732">
    <property type="term" value="P:formation of cytoplasmic translation initiation complex"/>
    <property type="evidence" value="ECO:0007669"/>
    <property type="project" value="UniProtKB-UniRule"/>
</dbReference>
<dbReference type="GO" id="GO:0006413">
    <property type="term" value="P:translational initiation"/>
    <property type="evidence" value="ECO:0000318"/>
    <property type="project" value="GO_Central"/>
</dbReference>
<dbReference type="CDD" id="cd08064">
    <property type="entry name" value="MPN_eIF3f"/>
    <property type="match status" value="1"/>
</dbReference>
<dbReference type="FunFam" id="3.40.140.10:FF:000082">
    <property type="entry name" value="Eukaryotic translation initiation factor 3 subunit F"/>
    <property type="match status" value="1"/>
</dbReference>
<dbReference type="Gene3D" id="3.40.140.10">
    <property type="entry name" value="Cytidine Deaminase, domain 2"/>
    <property type="match status" value="1"/>
</dbReference>
<dbReference type="HAMAP" id="MF_03005">
    <property type="entry name" value="eIF3f"/>
    <property type="match status" value="1"/>
</dbReference>
<dbReference type="InterPro" id="IPR027531">
    <property type="entry name" value="eIF3f"/>
</dbReference>
<dbReference type="InterPro" id="IPR024969">
    <property type="entry name" value="EIF3F/CSN6-like_C"/>
</dbReference>
<dbReference type="InterPro" id="IPR000555">
    <property type="entry name" value="JAMM/MPN+_dom"/>
</dbReference>
<dbReference type="InterPro" id="IPR037518">
    <property type="entry name" value="MPN"/>
</dbReference>
<dbReference type="PANTHER" id="PTHR10540:SF6">
    <property type="entry name" value="EUKARYOTIC TRANSLATION INITIATION FACTOR 3 SUBUNIT F"/>
    <property type="match status" value="1"/>
</dbReference>
<dbReference type="PANTHER" id="PTHR10540">
    <property type="entry name" value="EUKARYOTIC TRANSLATION INITIATION FACTOR 3 SUBUNIT F-RELATED"/>
    <property type="match status" value="1"/>
</dbReference>
<dbReference type="Pfam" id="PF01398">
    <property type="entry name" value="JAB"/>
    <property type="match status" value="1"/>
</dbReference>
<dbReference type="Pfam" id="PF13012">
    <property type="entry name" value="MitMem_reg"/>
    <property type="match status" value="1"/>
</dbReference>
<dbReference type="SMART" id="SM00232">
    <property type="entry name" value="JAB_MPN"/>
    <property type="match status" value="1"/>
</dbReference>
<dbReference type="PROSITE" id="PS50249">
    <property type="entry name" value="MPN"/>
    <property type="match status" value="1"/>
</dbReference>
<gene>
    <name type="ORF">UMAG_00175</name>
</gene>
<proteinExistence type="inferred from homology"/>
<name>EIF3F_MYCMD</name>
<keyword id="KW-0963">Cytoplasm</keyword>
<keyword id="KW-0396">Initiation factor</keyword>
<keyword id="KW-0648">Protein biosynthesis</keyword>
<keyword id="KW-1185">Reference proteome</keyword>
<organism>
    <name type="scientific">Mycosarcoma maydis</name>
    <name type="common">Corn smut fungus</name>
    <name type="synonym">Ustilago maydis</name>
    <dbReference type="NCBI Taxonomy" id="5270"/>
    <lineage>
        <taxon>Eukaryota</taxon>
        <taxon>Fungi</taxon>
        <taxon>Dikarya</taxon>
        <taxon>Basidiomycota</taxon>
        <taxon>Ustilaginomycotina</taxon>
        <taxon>Ustilaginomycetes</taxon>
        <taxon>Ustilaginales</taxon>
        <taxon>Ustilaginaceae</taxon>
        <taxon>Mycosarcoma</taxon>
    </lineage>
</organism>
<comment type="function">
    <text evidence="1">Component of the eukaryotic translation initiation factor 3 (eIF-3) complex, which is involved in protein synthesis of a specialized repertoire of mRNAs and, together with other initiation factors, stimulates binding of mRNA and methionyl-tRNAi to the 40S ribosome. The eIF-3 complex specifically targets and initiates translation of a subset of mRNAs involved in cell proliferation.</text>
</comment>
<comment type="subunit">
    <text evidence="1">Component of the eukaryotic translation initiation factor 3 (eIF-3) complex.</text>
</comment>
<comment type="subcellular location">
    <subcellularLocation>
        <location evidence="1">Cytoplasm</location>
    </subcellularLocation>
</comment>
<comment type="similarity">
    <text evidence="1">Belongs to the eIF-3 subunit F family.</text>
</comment>
<accession>Q4PI88</accession>
<accession>A0A0D1EBM2</accession>
<sequence>MSLAGSSSSALHLDFPASTGSGVMHSRSVTGVHVHPVALFSILDHYLRRNDGQHRVIGTLLGTRTESEIEIKNCFAVPHLEDAEEGQVQVDMEYHRSMYELCQKVRPDEVIVGWYATSPELNTYSALIQDFYSRETAPHQAVHLTMDTTIDGSKPSGLGIKSYISSPLGATPKAENCVFLPLPTNLLHSTPEHSSLSLLASQNISSPLTDLDALAVSLKQVQSQLDRVLTYVRAVISGEKEGDKAVGRFLNDTISVVPAGLDDNKLETLFNAHLQDVLMVSYLANVVRAQAEVSSRLTLLT</sequence>
<evidence type="ECO:0000255" key="1">
    <source>
        <dbReference type="HAMAP-Rule" id="MF_03005"/>
    </source>
</evidence>
<evidence type="ECO:0000255" key="2">
    <source>
        <dbReference type="PROSITE-ProRule" id="PRU01182"/>
    </source>
</evidence>
<reference key="1">
    <citation type="journal article" date="2006" name="Nature">
        <title>Insights from the genome of the biotrophic fungal plant pathogen Ustilago maydis.</title>
        <authorList>
            <person name="Kaemper J."/>
            <person name="Kahmann R."/>
            <person name="Boelker M."/>
            <person name="Ma L.-J."/>
            <person name="Brefort T."/>
            <person name="Saville B.J."/>
            <person name="Banuett F."/>
            <person name="Kronstad J.W."/>
            <person name="Gold S.E."/>
            <person name="Mueller O."/>
            <person name="Perlin M.H."/>
            <person name="Woesten H.A.B."/>
            <person name="de Vries R."/>
            <person name="Ruiz-Herrera J."/>
            <person name="Reynaga-Pena C.G."/>
            <person name="Snetselaar K."/>
            <person name="McCann M."/>
            <person name="Perez-Martin J."/>
            <person name="Feldbruegge M."/>
            <person name="Basse C.W."/>
            <person name="Steinberg G."/>
            <person name="Ibeas J.I."/>
            <person name="Holloman W."/>
            <person name="Guzman P."/>
            <person name="Farman M.L."/>
            <person name="Stajich J.E."/>
            <person name="Sentandreu R."/>
            <person name="Gonzalez-Prieto J.M."/>
            <person name="Kennell J.C."/>
            <person name="Molina L."/>
            <person name="Schirawski J."/>
            <person name="Mendoza-Mendoza A."/>
            <person name="Greilinger D."/>
            <person name="Muench K."/>
            <person name="Roessel N."/>
            <person name="Scherer M."/>
            <person name="Vranes M."/>
            <person name="Ladendorf O."/>
            <person name="Vincon V."/>
            <person name="Fuchs U."/>
            <person name="Sandrock B."/>
            <person name="Meng S."/>
            <person name="Ho E.C.H."/>
            <person name="Cahill M.J."/>
            <person name="Boyce K.J."/>
            <person name="Klose J."/>
            <person name="Klosterman S.J."/>
            <person name="Deelstra H.J."/>
            <person name="Ortiz-Castellanos L."/>
            <person name="Li W."/>
            <person name="Sanchez-Alonso P."/>
            <person name="Schreier P.H."/>
            <person name="Haeuser-Hahn I."/>
            <person name="Vaupel M."/>
            <person name="Koopmann E."/>
            <person name="Friedrich G."/>
            <person name="Voss H."/>
            <person name="Schlueter T."/>
            <person name="Margolis J."/>
            <person name="Platt D."/>
            <person name="Swimmer C."/>
            <person name="Gnirke A."/>
            <person name="Chen F."/>
            <person name="Vysotskaia V."/>
            <person name="Mannhaupt G."/>
            <person name="Gueldener U."/>
            <person name="Muensterkoetter M."/>
            <person name="Haase D."/>
            <person name="Oesterheld M."/>
            <person name="Mewes H.-W."/>
            <person name="Mauceli E.W."/>
            <person name="DeCaprio D."/>
            <person name="Wade C.M."/>
            <person name="Butler J."/>
            <person name="Young S.K."/>
            <person name="Jaffe D.B."/>
            <person name="Calvo S.E."/>
            <person name="Nusbaum C."/>
            <person name="Galagan J.E."/>
            <person name="Birren B.W."/>
        </authorList>
    </citation>
    <scope>NUCLEOTIDE SEQUENCE [LARGE SCALE GENOMIC DNA]</scope>
    <source>
        <strain>DSM 14603 / FGSC 9021 / UM521</strain>
    </source>
</reference>
<reference key="2">
    <citation type="submission" date="2014-09" db="EMBL/GenBank/DDBJ databases">
        <authorList>
            <person name="Gueldener U."/>
            <person name="Muensterkoetter M."/>
            <person name="Walter M.C."/>
            <person name="Mannhaupt G."/>
            <person name="Kahmann R."/>
        </authorList>
    </citation>
    <scope>GENOME REANNOTATION</scope>
    <source>
        <strain>DSM 14603 / FGSC 9021 / UM521</strain>
    </source>
</reference>
<feature type="chain" id="PRO_0000364335" description="Eukaryotic translation initiation factor 3 subunit F">
    <location>
        <begin position="1"/>
        <end position="301"/>
    </location>
</feature>
<feature type="domain" description="MPN" evidence="2">
    <location>
        <begin position="32"/>
        <end position="169"/>
    </location>
</feature>
<protein>
    <recommendedName>
        <fullName evidence="1">Eukaryotic translation initiation factor 3 subunit F</fullName>
        <shortName evidence="1">eIF3f</shortName>
    </recommendedName>
</protein>